<protein>
    <recommendedName>
        <fullName>Superoxide dismutase [Mn]</fullName>
        <ecNumber>1.15.1.1</ecNumber>
    </recommendedName>
</protein>
<name>SODM_STRPN</name>
<feature type="initiator methionine" description="Removed" evidence="1">
    <location>
        <position position="1"/>
    </location>
</feature>
<feature type="chain" id="PRO_0000160097" description="Superoxide dismutase [Mn]">
    <location>
        <begin position="2"/>
        <end position="201"/>
    </location>
</feature>
<feature type="binding site" evidence="1">
    <location>
        <position position="27"/>
    </location>
    <ligand>
        <name>Mn(2+)</name>
        <dbReference type="ChEBI" id="CHEBI:29035"/>
    </ligand>
</feature>
<feature type="binding site" evidence="1">
    <location>
        <position position="81"/>
    </location>
    <ligand>
        <name>Mn(2+)</name>
        <dbReference type="ChEBI" id="CHEBI:29035"/>
    </ligand>
</feature>
<feature type="binding site" evidence="1">
    <location>
        <position position="163"/>
    </location>
    <ligand>
        <name>Mn(2+)</name>
        <dbReference type="ChEBI" id="CHEBI:29035"/>
    </ligand>
</feature>
<feature type="binding site" evidence="1">
    <location>
        <position position="167"/>
    </location>
    <ligand>
        <name>Mn(2+)</name>
        <dbReference type="ChEBI" id="CHEBI:29035"/>
    </ligand>
</feature>
<feature type="sequence variant" description="In strain: NEM1278.">
    <original>A</original>
    <variation>V</variation>
    <location>
        <position position="42"/>
    </location>
</feature>
<feature type="sequence variant" description="In strain: NEM667 and D39.">
    <original>ESIPA</original>
    <variation>DLSQH</variation>
    <location>
        <begin position="61"/>
        <end position="65"/>
    </location>
</feature>
<feature type="sequence variant" description="In strain: 1510.">
    <original>A</original>
    <variation>T</variation>
    <location>
        <position position="100"/>
    </location>
</feature>
<feature type="sequence variant" description="In strain: NEM1122.">
    <original>F</original>
    <variation>L</variation>
    <location>
        <position position="110"/>
    </location>
</feature>
<feature type="sequence variant" description="In strain: 1510.">
    <original>T</original>
    <variation>I</variation>
    <location>
        <position position="143"/>
    </location>
</feature>
<feature type="sequence variant" description="In strain: 872.">
    <original>Q</original>
    <variation>L</variation>
    <location>
        <position position="148"/>
    </location>
</feature>
<feature type="sequence variant" description="In strain: 1293, 1454, 1565, 1639, 3051 and 3203.">
    <original>Q</original>
    <variation>P</variation>
    <location>
        <position position="148"/>
    </location>
</feature>
<feature type="sequence variant" description="In strain: 661.">
    <original>I</original>
    <variation>F</variation>
    <location>
        <position position="152"/>
    </location>
</feature>
<reference key="1">
    <citation type="journal article" date="2000" name="Infect. Immun.">
        <title>Role of manganese-containing superoxide dismutase in oxidative stress and virulence of Streptococcus pneumoniae.</title>
        <authorList>
            <person name="Yesilkaya H."/>
            <person name="Kadioglu A."/>
            <person name="Gingles N."/>
            <person name="Alexander J.E."/>
            <person name="Mitchell T.J."/>
            <person name="Andrew P.W."/>
        </authorList>
    </citation>
    <scope>NUCLEOTIDE SEQUENCE [GENOMIC DNA]</scope>
    <source>
        <strain>D39 / NCTC 7466 / Serotype 2</strain>
    </source>
</reference>
<reference key="2">
    <citation type="journal article" date="2001" name="Science">
        <title>Complete genome sequence of a virulent isolate of Streptococcus pneumoniae.</title>
        <authorList>
            <person name="Tettelin H."/>
            <person name="Nelson K.E."/>
            <person name="Paulsen I.T."/>
            <person name="Eisen J.A."/>
            <person name="Read T.D."/>
            <person name="Peterson S.N."/>
            <person name="Heidelberg J.F."/>
            <person name="DeBoy R.T."/>
            <person name="Haft D.H."/>
            <person name="Dodson R.J."/>
            <person name="Durkin A.S."/>
            <person name="Gwinn M.L."/>
            <person name="Kolonay J.F."/>
            <person name="Nelson W.C."/>
            <person name="Peterson J.D."/>
            <person name="Umayam L.A."/>
            <person name="White O."/>
            <person name="Salzberg S.L."/>
            <person name="Lewis M.R."/>
            <person name="Radune D."/>
            <person name="Holtzapple E.K."/>
            <person name="Khouri H.M."/>
            <person name="Wolf A.M."/>
            <person name="Utterback T.R."/>
            <person name="Hansen C.L."/>
            <person name="McDonald L.A."/>
            <person name="Feldblyum T.V."/>
            <person name="Angiuoli S.V."/>
            <person name="Dickinson T."/>
            <person name="Hickey E.K."/>
            <person name="Holt I.E."/>
            <person name="Loftus B.J."/>
            <person name="Yang F."/>
            <person name="Smith H.O."/>
            <person name="Venter J.C."/>
            <person name="Dougherty B.A."/>
            <person name="Morrison D.A."/>
            <person name="Hollingshead S.K."/>
            <person name="Fraser C.M."/>
        </authorList>
    </citation>
    <scope>NUCLEOTIDE SEQUENCE [LARGE SCALE GENOMIC DNA]</scope>
    <source>
        <strain>ATCC BAA-334 / TIGR4</strain>
    </source>
</reference>
<reference key="3">
    <citation type="journal article" date="1995" name="FEMS Microbiol. Lett.">
        <title>Characterization of superoxide dismutase genes from Gram-positive bacteria by polymerase chain reaction using degenerate primers.</title>
        <authorList>
            <person name="Poyart C."/>
            <person name="Berche P."/>
            <person name="Trieu-Cuot P."/>
        </authorList>
    </citation>
    <scope>NUCLEOTIDE SEQUENCE [GENOMIC DNA] OF 18-162</scope>
    <source>
        <strain>NEM667</strain>
    </source>
</reference>
<reference key="4">
    <citation type="journal article" date="1998" name="J. Clin. Microbiol.">
        <title>Identification of streptococci to species level by sequencing the gene encoding the manganese-dependent superoxide dismutase.</title>
        <authorList>
            <person name="Poyart C."/>
            <person name="Quesne G."/>
            <person name="Coulon S."/>
            <person name="Berche P."/>
            <person name="Trieu-Cuot P."/>
        </authorList>
    </citation>
    <scope>NUCLEOTIDE SEQUENCE [GENOMIC DNA] OF 18-162</scope>
    <source>
        <strain>Various strains</strain>
    </source>
</reference>
<reference key="5">
    <citation type="journal article" date="1999" name="Microbiology">
        <title>Genetic approaches to the identification of the mitis group within the genus Streptococcus.</title>
        <authorList>
            <person name="Kawamura Y."/>
            <person name="Whiley R.A."/>
            <person name="Shu S.E."/>
            <person name="Ezaki T."/>
            <person name="Hardie J.M."/>
        </authorList>
    </citation>
    <scope>NUCLEOTIDE SEQUENCE [GENOMIC DNA] OF 33-154</scope>
    <source>
        <strain>1293</strain>
        <strain>1454</strain>
        <strain>1510</strain>
        <strain>1565</strain>
        <strain>1639</strain>
        <strain>3051</strain>
        <strain>3203</strain>
        <strain>653</strain>
        <strain>661</strain>
        <strain>872</strain>
        <strain>GTC261T / NCTC 7465T</strain>
        <strain>YK-11</strain>
        <strain>YK-12</strain>
        <strain>YK-14</strain>
        <strain>YK-20</strain>
        <strain>YK-5</strain>
    </source>
</reference>
<keyword id="KW-0464">Manganese</keyword>
<keyword id="KW-0479">Metal-binding</keyword>
<keyword id="KW-0560">Oxidoreductase</keyword>
<keyword id="KW-1185">Reference proteome</keyword>
<evidence type="ECO:0000250" key="1"/>
<evidence type="ECO:0000305" key="2"/>
<proteinExistence type="evidence at protein level"/>
<comment type="function">
    <text>Destroys superoxide anion radicals which are normally produced within the cells and which are toxic to biological systems. May play a critical role against oxidative stress, affecting both the survival and the virulence of S.pneumoniae.</text>
</comment>
<comment type="catalytic activity">
    <reaction>
        <text>2 superoxide + 2 H(+) = H2O2 + O2</text>
        <dbReference type="Rhea" id="RHEA:20696"/>
        <dbReference type="ChEBI" id="CHEBI:15378"/>
        <dbReference type="ChEBI" id="CHEBI:15379"/>
        <dbReference type="ChEBI" id="CHEBI:16240"/>
        <dbReference type="ChEBI" id="CHEBI:18421"/>
        <dbReference type="EC" id="1.15.1.1"/>
    </reaction>
</comment>
<comment type="cofactor">
    <cofactor evidence="1">
        <name>Mn(2+)</name>
        <dbReference type="ChEBI" id="CHEBI:29035"/>
    </cofactor>
    <text evidence="1">Binds 1 Mn(2+) ion per subunit.</text>
</comment>
<comment type="subunit">
    <text evidence="1">Homodimer.</text>
</comment>
<comment type="interaction">
    <interactant intactId="EBI-2207137">
        <id>P0A4J6</id>
    </interactant>
    <interactant intactId="EBI-2207053">
        <id>Q97SE5</id>
        <label>gatC</label>
    </interactant>
    <organismsDiffer>false</organismsDiffer>
    <experiments>2</experiments>
</comment>
<comment type="interaction">
    <interactant intactId="EBI-2207137">
        <id>P0A4J6</id>
    </interactant>
    <interactant intactId="EBI-2206949">
        <id>Q97NV3</id>
        <label>groES</label>
    </interactant>
    <organismsDiffer>false</organismsDiffer>
    <experiments>2</experiments>
</comment>
<comment type="interaction">
    <interactant intactId="EBI-2207137">
        <id>P0A4J6</id>
    </interactant>
    <interactant intactId="EBI-2206697">
        <id>Q97NX6</id>
        <label>scpB</label>
    </interactant>
    <organismsDiffer>false</organismsDiffer>
    <experiments>2</experiments>
</comment>
<comment type="similarity">
    <text evidence="2">Belongs to the iron/manganese superoxide dismutase family.</text>
</comment>
<sequence>MAIILPELPYAYDALEPYIDAETMHLHHDKHHQTYVNNANAALEKHPEIGEDLEALLADVESIPADIRQALINNGGGHLNHALFWELMTPEKTAPSAELAAAIDATFGSFEEFQAAFTAAATTRFGSGWAWLVVNKEGKLEVTSTANQDTPISEGKKPILGLDVWEHAYYVKYRNVRPDYIKAFFSVINWNKVDELYAAAK</sequence>
<accession>P0A4J6</accession>
<accession>O33757</accession>
<accession>O54268</accession>
<accession>O54269</accession>
<accession>Q59949</accession>
<accession>Q9R3B6</accession>
<accession>Q9R3B8</accession>
<accession>Q9S175</accession>
<accession>Q9S176</accession>
<accession>Q9S177</accession>
<accession>Q9S447</accession>
<gene>
    <name type="primary">sodA</name>
    <name type="ordered locus">SP_0766</name>
</gene>
<organism>
    <name type="scientific">Streptococcus pneumoniae serotype 4 (strain ATCC BAA-334 / TIGR4)</name>
    <dbReference type="NCBI Taxonomy" id="170187"/>
    <lineage>
        <taxon>Bacteria</taxon>
        <taxon>Bacillati</taxon>
        <taxon>Bacillota</taxon>
        <taxon>Bacilli</taxon>
        <taxon>Lactobacillales</taxon>
        <taxon>Streptococcaceae</taxon>
        <taxon>Streptococcus</taxon>
    </lineage>
</organism>
<dbReference type="EC" id="1.15.1.1"/>
<dbReference type="EMBL" id="AF162664">
    <property type="protein sequence ID" value="AAD50778.1"/>
    <property type="molecule type" value="Genomic_DNA"/>
</dbReference>
<dbReference type="EMBL" id="AE005672">
    <property type="protein sequence ID" value="AAK74904.1"/>
    <property type="molecule type" value="Genomic_DNA"/>
</dbReference>
<dbReference type="EMBL" id="Z49246">
    <property type="protein sequence ID" value="CAA89213.1"/>
    <property type="molecule type" value="Genomic_DNA"/>
</dbReference>
<dbReference type="EMBL" id="Z95914">
    <property type="protein sequence ID" value="CAB09367.1"/>
    <property type="molecule type" value="Genomic_DNA"/>
</dbReference>
<dbReference type="EMBL" id="Z99200">
    <property type="protein sequence ID" value="CAB16344.1"/>
    <property type="molecule type" value="Genomic_DNA"/>
</dbReference>
<dbReference type="EMBL" id="Z99201">
    <property type="protein sequence ID" value="CAB16345.1"/>
    <property type="molecule type" value="Genomic_DNA"/>
</dbReference>
<dbReference type="EMBL" id="Z99202">
    <property type="protein sequence ID" value="CAB16346.1"/>
    <property type="molecule type" value="Genomic_DNA"/>
</dbReference>
<dbReference type="EMBL" id="Z99203">
    <property type="protein sequence ID" value="CAB16347.1"/>
    <property type="molecule type" value="Genomic_DNA"/>
</dbReference>
<dbReference type="EMBL" id="Z99204">
    <property type="protein sequence ID" value="CAB16348.1"/>
    <property type="molecule type" value="Genomic_DNA"/>
</dbReference>
<dbReference type="EMBL" id="Z99205">
    <property type="protein sequence ID" value="CAB16349.1"/>
    <property type="molecule type" value="Genomic_DNA"/>
</dbReference>
<dbReference type="EMBL" id="Z99206">
    <property type="protein sequence ID" value="CAB16350.1"/>
    <property type="molecule type" value="Genomic_DNA"/>
</dbReference>
<dbReference type="EMBL" id="AB021544">
    <property type="protein sequence ID" value="BAA85492.1"/>
    <property type="molecule type" value="Genomic_DNA"/>
</dbReference>
<dbReference type="EMBL" id="AB021605">
    <property type="protein sequence ID" value="BAA85553.1"/>
    <property type="molecule type" value="Genomic_DNA"/>
</dbReference>
<dbReference type="EMBL" id="AB021606">
    <property type="protein sequence ID" value="BAA85554.1"/>
    <property type="molecule type" value="Genomic_DNA"/>
</dbReference>
<dbReference type="EMBL" id="AB021607">
    <property type="protein sequence ID" value="BAA85555.1"/>
    <property type="molecule type" value="Genomic_DNA"/>
</dbReference>
<dbReference type="EMBL" id="AB021608">
    <property type="protein sequence ID" value="BAA85556.1"/>
    <property type="molecule type" value="Genomic_DNA"/>
</dbReference>
<dbReference type="EMBL" id="AB021609">
    <property type="protein sequence ID" value="BAA85557.1"/>
    <property type="molecule type" value="Genomic_DNA"/>
</dbReference>
<dbReference type="EMBL" id="AB021610">
    <property type="protein sequence ID" value="BAA85558.1"/>
    <property type="molecule type" value="Genomic_DNA"/>
</dbReference>
<dbReference type="EMBL" id="AB021611">
    <property type="protein sequence ID" value="BAA85559.1"/>
    <property type="molecule type" value="Genomic_DNA"/>
</dbReference>
<dbReference type="EMBL" id="AB021612">
    <property type="protein sequence ID" value="BAA85560.1"/>
    <property type="molecule type" value="Genomic_DNA"/>
</dbReference>
<dbReference type="EMBL" id="AB021613">
    <property type="protein sequence ID" value="BAA85561.1"/>
    <property type="molecule type" value="Genomic_DNA"/>
</dbReference>
<dbReference type="EMBL" id="AB021614">
    <property type="protein sequence ID" value="BAA85562.1"/>
    <property type="molecule type" value="Genomic_DNA"/>
</dbReference>
<dbReference type="EMBL" id="AB021615">
    <property type="protein sequence ID" value="BAA85563.1"/>
    <property type="molecule type" value="Genomic_DNA"/>
</dbReference>
<dbReference type="EMBL" id="AB021616">
    <property type="protein sequence ID" value="BAA85564.1"/>
    <property type="molecule type" value="Genomic_DNA"/>
</dbReference>
<dbReference type="EMBL" id="AB021617">
    <property type="protein sequence ID" value="BAA85565.1"/>
    <property type="molecule type" value="Genomic_DNA"/>
</dbReference>
<dbReference type="EMBL" id="AB021618">
    <property type="protein sequence ID" value="BAA85566.1"/>
    <property type="molecule type" value="Genomic_DNA"/>
</dbReference>
<dbReference type="EMBL" id="AB021619">
    <property type="protein sequence ID" value="BAA85567.1"/>
    <property type="molecule type" value="Genomic_DNA"/>
</dbReference>
<dbReference type="PIR" id="G95088">
    <property type="entry name" value="G95088"/>
</dbReference>
<dbReference type="PIR" id="S54795">
    <property type="entry name" value="S54795"/>
</dbReference>
<dbReference type="RefSeq" id="WP_000974746.1">
    <property type="nucleotide sequence ID" value="NZ_CP155539.1"/>
</dbReference>
<dbReference type="SMR" id="P0A4J6"/>
<dbReference type="IntAct" id="P0A4J6">
    <property type="interactions" value="3"/>
</dbReference>
<dbReference type="PaxDb" id="170187-SP_0766"/>
<dbReference type="EnsemblBacteria" id="AAK74904">
    <property type="protein sequence ID" value="AAK74904"/>
    <property type="gene ID" value="SP_0766"/>
</dbReference>
<dbReference type="GeneID" id="93739911"/>
<dbReference type="KEGG" id="spn:SP_0766"/>
<dbReference type="eggNOG" id="COG0605">
    <property type="taxonomic scope" value="Bacteria"/>
</dbReference>
<dbReference type="BioCyc" id="SPNE170187:G1FZB-782-MONOMER"/>
<dbReference type="Proteomes" id="UP000000585">
    <property type="component" value="Chromosome"/>
</dbReference>
<dbReference type="GO" id="GO:0005737">
    <property type="term" value="C:cytoplasm"/>
    <property type="evidence" value="ECO:0007669"/>
    <property type="project" value="TreeGrafter"/>
</dbReference>
<dbReference type="GO" id="GO:0046872">
    <property type="term" value="F:metal ion binding"/>
    <property type="evidence" value="ECO:0007669"/>
    <property type="project" value="UniProtKB-KW"/>
</dbReference>
<dbReference type="GO" id="GO:0004784">
    <property type="term" value="F:superoxide dismutase activity"/>
    <property type="evidence" value="ECO:0007669"/>
    <property type="project" value="UniProtKB-EC"/>
</dbReference>
<dbReference type="FunFam" id="1.10.287.990:FF:000001">
    <property type="entry name" value="Superoxide dismutase"/>
    <property type="match status" value="1"/>
</dbReference>
<dbReference type="FunFam" id="3.55.40.20:FF:000001">
    <property type="entry name" value="Superoxide dismutase"/>
    <property type="match status" value="1"/>
</dbReference>
<dbReference type="Gene3D" id="1.10.287.990">
    <property type="entry name" value="Fe,Mn superoxide dismutase (SOD) domain"/>
    <property type="match status" value="1"/>
</dbReference>
<dbReference type="Gene3D" id="3.55.40.20">
    <property type="entry name" value="Iron/manganese superoxide dismutase, C-terminal domain"/>
    <property type="match status" value="1"/>
</dbReference>
<dbReference type="InterPro" id="IPR001189">
    <property type="entry name" value="Mn/Fe_SOD"/>
</dbReference>
<dbReference type="InterPro" id="IPR019833">
    <property type="entry name" value="Mn/Fe_SOD_BS"/>
</dbReference>
<dbReference type="InterPro" id="IPR019832">
    <property type="entry name" value="Mn/Fe_SOD_C"/>
</dbReference>
<dbReference type="InterPro" id="IPR019831">
    <property type="entry name" value="Mn/Fe_SOD_N"/>
</dbReference>
<dbReference type="InterPro" id="IPR036324">
    <property type="entry name" value="Mn/Fe_SOD_N_sf"/>
</dbReference>
<dbReference type="InterPro" id="IPR036314">
    <property type="entry name" value="SOD_C_sf"/>
</dbReference>
<dbReference type="PANTHER" id="PTHR43595">
    <property type="entry name" value="37S RIBOSOMAL PROTEIN S26, MITOCHONDRIAL"/>
    <property type="match status" value="1"/>
</dbReference>
<dbReference type="PANTHER" id="PTHR43595:SF2">
    <property type="entry name" value="SMALL RIBOSOMAL SUBUNIT PROTEIN MS42"/>
    <property type="match status" value="1"/>
</dbReference>
<dbReference type="Pfam" id="PF02777">
    <property type="entry name" value="Sod_Fe_C"/>
    <property type="match status" value="1"/>
</dbReference>
<dbReference type="Pfam" id="PF00081">
    <property type="entry name" value="Sod_Fe_N"/>
    <property type="match status" value="1"/>
</dbReference>
<dbReference type="PIRSF" id="PIRSF000349">
    <property type="entry name" value="SODismutase"/>
    <property type="match status" value="1"/>
</dbReference>
<dbReference type="PRINTS" id="PR01703">
    <property type="entry name" value="MNSODISMTASE"/>
</dbReference>
<dbReference type="SUPFAM" id="SSF54719">
    <property type="entry name" value="Fe,Mn superoxide dismutase (SOD), C-terminal domain"/>
    <property type="match status" value="1"/>
</dbReference>
<dbReference type="SUPFAM" id="SSF46609">
    <property type="entry name" value="Fe,Mn superoxide dismutase (SOD), N-terminal domain"/>
    <property type="match status" value="1"/>
</dbReference>
<dbReference type="PROSITE" id="PS00088">
    <property type="entry name" value="SOD_MN"/>
    <property type="match status" value="1"/>
</dbReference>